<proteinExistence type="evidence at protein level"/>
<name>TPD54_RAT</name>
<gene>
    <name type="primary">Tpd52l2</name>
</gene>
<dbReference type="EMBL" id="BC059167">
    <property type="protein sequence ID" value="AAH59167.1"/>
    <property type="molecule type" value="mRNA"/>
</dbReference>
<dbReference type="RefSeq" id="NP_942039.1">
    <property type="nucleotide sequence ID" value="NM_198744.3"/>
</dbReference>
<dbReference type="SMR" id="Q6PCT3"/>
<dbReference type="BioGRID" id="255374">
    <property type="interactions" value="1"/>
</dbReference>
<dbReference type="FunCoup" id="Q6PCT3">
    <property type="interactions" value="4027"/>
</dbReference>
<dbReference type="STRING" id="10116.ENSRNOP00000020374"/>
<dbReference type="iPTMnet" id="Q6PCT3"/>
<dbReference type="PhosphoSitePlus" id="Q6PCT3"/>
<dbReference type="jPOST" id="Q6PCT3"/>
<dbReference type="PaxDb" id="10116-ENSRNOP00000020374"/>
<dbReference type="GeneID" id="296480"/>
<dbReference type="KEGG" id="rno:296480"/>
<dbReference type="UCSC" id="RGD:735167">
    <property type="organism name" value="rat"/>
</dbReference>
<dbReference type="AGR" id="RGD:735167"/>
<dbReference type="CTD" id="7165"/>
<dbReference type="RGD" id="735167">
    <property type="gene designation" value="Tpd52l2"/>
</dbReference>
<dbReference type="eggNOG" id="KOG4010">
    <property type="taxonomic scope" value="Eukaryota"/>
</dbReference>
<dbReference type="HOGENOM" id="CLU_080743_1_0_1"/>
<dbReference type="InParanoid" id="Q6PCT3"/>
<dbReference type="PhylomeDB" id="Q6PCT3"/>
<dbReference type="PRO" id="PR:Q6PCT3"/>
<dbReference type="Proteomes" id="UP000002494">
    <property type="component" value="Chromosome 3"/>
</dbReference>
<dbReference type="Bgee" id="ENSRNOG00000015122">
    <property type="expression patterns" value="Expressed in cerebellum and 19 other cell types or tissues"/>
</dbReference>
<dbReference type="GO" id="GO:0005737">
    <property type="term" value="C:cytoplasm"/>
    <property type="evidence" value="ECO:0000250"/>
    <property type="project" value="UniProtKB"/>
</dbReference>
<dbReference type="GO" id="GO:0048471">
    <property type="term" value="C:perinuclear region of cytoplasm"/>
    <property type="evidence" value="ECO:0000250"/>
    <property type="project" value="UniProtKB"/>
</dbReference>
<dbReference type="GO" id="GO:0042803">
    <property type="term" value="F:protein homodimerization activity"/>
    <property type="evidence" value="ECO:0000266"/>
    <property type="project" value="RGD"/>
</dbReference>
<dbReference type="InterPro" id="IPR007327">
    <property type="entry name" value="TPD52"/>
</dbReference>
<dbReference type="PANTHER" id="PTHR19307">
    <property type="entry name" value="TUMOR PROTEIN D52"/>
    <property type="match status" value="1"/>
</dbReference>
<dbReference type="PANTHER" id="PTHR19307:SF13">
    <property type="entry name" value="TUMOR PROTEIN D54"/>
    <property type="match status" value="1"/>
</dbReference>
<dbReference type="Pfam" id="PF04201">
    <property type="entry name" value="TPD52"/>
    <property type="match status" value="2"/>
</dbReference>
<sequence>MDSASQDINLNSPNKGVLSDFMTDVPVDPGVVHRTPAVEGLTEVEEEELRAELAKVEEEIVTLRQVLAAKERHCGELKRRLGLSTLGELKQNLSRSWHDVQGSTAYVKTSEKLGEWNEKVTQSDLYKKTQETLSQAGQKTSAALSTMGSAISRKLGDMSSYSIRHSISMPVMRNSATFKSFEDRVGTIKSKVVGGRENGSDTLPSSPGSGDQTLPDHAPF</sequence>
<evidence type="ECO:0000250" key="1"/>
<evidence type="ECO:0000250" key="2">
    <source>
        <dbReference type="UniProtKB" id="O43399"/>
    </source>
</evidence>
<evidence type="ECO:0000250" key="3">
    <source>
        <dbReference type="UniProtKB" id="Q9CYZ2"/>
    </source>
</evidence>
<evidence type="ECO:0000255" key="4"/>
<evidence type="ECO:0000256" key="5">
    <source>
        <dbReference type="SAM" id="MobiDB-lite"/>
    </source>
</evidence>
<evidence type="ECO:0000305" key="6"/>
<evidence type="ECO:0007744" key="7">
    <source>
    </source>
</evidence>
<feature type="chain" id="PRO_0000185747" description="Tumor protein D54">
    <location>
        <begin position="1"/>
        <end position="220"/>
    </location>
</feature>
<feature type="region of interest" description="Disordered" evidence="5">
    <location>
        <begin position="1"/>
        <end position="26"/>
    </location>
</feature>
<feature type="region of interest" description="Disordered" evidence="5">
    <location>
        <begin position="189"/>
        <end position="220"/>
    </location>
</feature>
<feature type="coiled-coil region" evidence="4">
    <location>
        <begin position="40"/>
        <end position="82"/>
    </location>
</feature>
<feature type="compositionally biased region" description="Polar residues" evidence="5">
    <location>
        <begin position="1"/>
        <end position="14"/>
    </location>
</feature>
<feature type="compositionally biased region" description="Polar residues" evidence="5">
    <location>
        <begin position="200"/>
        <end position="212"/>
    </location>
</feature>
<feature type="modified residue" description="N-acetylmethionine" evidence="2">
    <location>
        <position position="1"/>
    </location>
</feature>
<feature type="modified residue" description="Phosphoserine" evidence="2">
    <location>
        <position position="3"/>
    </location>
</feature>
<feature type="modified residue" description="Phosphoserine" evidence="7">
    <location>
        <position position="12"/>
    </location>
</feature>
<feature type="modified residue" description="Phosphoserine" evidence="2">
    <location>
        <position position="19"/>
    </location>
</feature>
<feature type="modified residue" description="Phosphoserine" evidence="2">
    <location>
        <position position="96"/>
    </location>
</feature>
<feature type="modified residue" description="Phosphoserine" evidence="2">
    <location>
        <position position="149"/>
    </location>
</feature>
<feature type="modified residue" description="Phosphoserine" evidence="3">
    <location>
        <position position="168"/>
    </location>
</feature>
<feature type="modified residue" description="Phosphoserine" evidence="2">
    <location>
        <position position="175"/>
    </location>
</feature>
<feature type="modified residue" description="Phosphothreonine" evidence="2">
    <location>
        <position position="177"/>
    </location>
</feature>
<feature type="modified residue" description="Phosphoserine" evidence="7">
    <location>
        <position position="180"/>
    </location>
</feature>
<feature type="modified residue" description="Phosphothreonine" evidence="2">
    <location>
        <position position="187"/>
    </location>
</feature>
<feature type="modified residue" description="Phosphoserine" evidence="3">
    <location>
        <position position="206"/>
    </location>
</feature>
<feature type="modified residue" description="Phosphoserine" evidence="7">
    <location>
        <position position="209"/>
    </location>
</feature>
<accession>Q6PCT3</accession>
<protein>
    <recommendedName>
        <fullName>Tumor protein D54</fullName>
    </recommendedName>
    <alternativeName>
        <fullName>Tumor protein D52-like 2</fullName>
    </alternativeName>
</protein>
<organism>
    <name type="scientific">Rattus norvegicus</name>
    <name type="common">Rat</name>
    <dbReference type="NCBI Taxonomy" id="10116"/>
    <lineage>
        <taxon>Eukaryota</taxon>
        <taxon>Metazoa</taxon>
        <taxon>Chordata</taxon>
        <taxon>Craniata</taxon>
        <taxon>Vertebrata</taxon>
        <taxon>Euteleostomi</taxon>
        <taxon>Mammalia</taxon>
        <taxon>Eutheria</taxon>
        <taxon>Euarchontoglires</taxon>
        <taxon>Glires</taxon>
        <taxon>Rodentia</taxon>
        <taxon>Myomorpha</taxon>
        <taxon>Muroidea</taxon>
        <taxon>Muridae</taxon>
        <taxon>Murinae</taxon>
        <taxon>Rattus</taxon>
    </lineage>
</organism>
<keyword id="KW-0007">Acetylation</keyword>
<keyword id="KW-0175">Coiled coil</keyword>
<keyword id="KW-0597">Phosphoprotein</keyword>
<keyword id="KW-1185">Reference proteome</keyword>
<reference key="1">
    <citation type="journal article" date="2004" name="Genome Res.">
        <title>The status, quality, and expansion of the NIH full-length cDNA project: the Mammalian Gene Collection (MGC).</title>
        <authorList>
            <consortium name="The MGC Project Team"/>
        </authorList>
    </citation>
    <scope>NUCLEOTIDE SEQUENCE [LARGE SCALE MRNA]</scope>
    <source>
        <tissue>Pituitary</tissue>
    </source>
</reference>
<reference key="2">
    <citation type="journal article" date="2012" name="Nat. Commun.">
        <title>Quantitative maps of protein phosphorylation sites across 14 different rat organs and tissues.</title>
        <authorList>
            <person name="Lundby A."/>
            <person name="Secher A."/>
            <person name="Lage K."/>
            <person name="Nordsborg N.B."/>
            <person name="Dmytriyev A."/>
            <person name="Lundby C."/>
            <person name="Olsen J.V."/>
        </authorList>
    </citation>
    <scope>PHOSPHORYLATION [LARGE SCALE ANALYSIS] AT SER-12; SER-180 AND SER-209</scope>
    <scope>IDENTIFICATION BY MASS SPECTROMETRY [LARGE SCALE ANALYSIS]</scope>
</reference>
<comment type="subunit">
    <text evidence="1">Forms a homodimer or heterodimer with other members of the family. Interacts with MAL2 (By similarity).</text>
</comment>
<comment type="similarity">
    <text evidence="6">Belongs to the TPD52 family.</text>
</comment>